<evidence type="ECO:0000255" key="1">
    <source>
        <dbReference type="HAMAP-Rule" id="MF_00452"/>
    </source>
</evidence>
<protein>
    <recommendedName>
        <fullName evidence="1">Phosphoenolpyruvate carboxykinase [GTP]</fullName>
        <shortName evidence="1">PEP carboxykinase</shortName>
        <shortName evidence="1">PEPCK</shortName>
        <ecNumber evidence="1">4.1.1.32</ecNumber>
    </recommendedName>
</protein>
<sequence>MTTVNAPEFVRHPKLIAWVEEIANLTKPAKIEWCDGSEEEYQRLIDLMIANGTMQKLNQEKHPGSYLANSDPSDVARVEDRTYICSQNKEDAGATNNWEDPAVMREKLNGLFEGSMKGRTMYVVPFSMGPLGSHIAHIGIELTDSPYVAVSMRKMARMGKAVYDVLGTDGEFVPCVHTVGAPLAEGQKDVAWPCNPEKYIVHYPETREIWSFGSGYGGNALLGKKCLALRIASVMGREQGWLAEHMLILGVTNPQGEKHYIAAAFPSACGKTNFAMLIPPAGYEGWKIETVGDDIAWIKPGEDGRLYAINPEAGFFGVAPGTNTKTNPNCMATLHKDVIYTNVAVTDDGQVWWEGLSKEVPANLTNWKGQPHVNGEKAAHPNARFTVAAGQCPSIDADWENPAGVPISAFIFGGRRADTVPLVSEAFDWVDGVYKAATMGSETTAAAVGQQGIVRRDPFAMLPFAGYNMADYFDHWLNLGAKVSEKAEASGNKLPKIFNVNWFRRDAEGNFVWPGFGQNMRVLEWIIDRCEGRANAVETPIGFVPTYEDLNWEGTEFTKEQFDLITNQDRDQWVTEIESHTELFNKLGERLPKALKERQAALLEAVKTGF</sequence>
<keyword id="KW-0963">Cytoplasm</keyword>
<keyword id="KW-0210">Decarboxylase</keyword>
<keyword id="KW-0312">Gluconeogenesis</keyword>
<keyword id="KW-0342">GTP-binding</keyword>
<keyword id="KW-0456">Lyase</keyword>
<keyword id="KW-0464">Manganese</keyword>
<keyword id="KW-0479">Metal-binding</keyword>
<keyword id="KW-0547">Nucleotide-binding</keyword>
<comment type="function">
    <text evidence="1">Catalyzes the conversion of oxaloacetate (OAA) to phosphoenolpyruvate (PEP), the rate-limiting step in the metabolic pathway that produces glucose from lactate and other precursors derived from the citric acid cycle.</text>
</comment>
<comment type="catalytic activity">
    <reaction evidence="1">
        <text>oxaloacetate + GTP = phosphoenolpyruvate + GDP + CO2</text>
        <dbReference type="Rhea" id="RHEA:10388"/>
        <dbReference type="ChEBI" id="CHEBI:16452"/>
        <dbReference type="ChEBI" id="CHEBI:16526"/>
        <dbReference type="ChEBI" id="CHEBI:37565"/>
        <dbReference type="ChEBI" id="CHEBI:58189"/>
        <dbReference type="ChEBI" id="CHEBI:58702"/>
        <dbReference type="EC" id="4.1.1.32"/>
    </reaction>
</comment>
<comment type="cofactor">
    <cofactor evidence="1">
        <name>Mn(2+)</name>
        <dbReference type="ChEBI" id="CHEBI:29035"/>
    </cofactor>
    <text evidence="1">Binds 1 Mn(2+) ion per subunit.</text>
</comment>
<comment type="pathway">
    <text evidence="1">Carbohydrate biosynthesis; gluconeogenesis.</text>
</comment>
<comment type="subunit">
    <text evidence="1">Monomer.</text>
</comment>
<comment type="subcellular location">
    <subcellularLocation>
        <location evidence="1">Cytoplasm</location>
    </subcellularLocation>
</comment>
<comment type="similarity">
    <text evidence="1">Belongs to the phosphoenolpyruvate carboxykinase [GTP] family.</text>
</comment>
<accession>B7I624</accession>
<gene>
    <name evidence="1" type="primary">pckG</name>
    <name type="ordered locus">AB57_3085</name>
</gene>
<name>PCKG_ACIB5</name>
<feature type="chain" id="PRO_1000125038" description="Phosphoenolpyruvate carboxykinase [GTP]">
    <location>
        <begin position="1"/>
        <end position="610"/>
    </location>
</feature>
<feature type="active site" evidence="1">
    <location>
        <position position="269"/>
    </location>
</feature>
<feature type="binding site" evidence="1">
    <location>
        <position position="77"/>
    </location>
    <ligand>
        <name>substrate</name>
    </ligand>
</feature>
<feature type="binding site" evidence="1">
    <location>
        <begin position="216"/>
        <end position="218"/>
    </location>
    <ligand>
        <name>substrate</name>
    </ligand>
</feature>
<feature type="binding site" evidence="1">
    <location>
        <position position="225"/>
    </location>
    <ligand>
        <name>Mn(2+)</name>
        <dbReference type="ChEBI" id="CHEBI:29035"/>
    </ligand>
</feature>
<feature type="binding site" evidence="1">
    <location>
        <position position="245"/>
    </location>
    <ligand>
        <name>Mn(2+)</name>
        <dbReference type="ChEBI" id="CHEBI:29035"/>
    </ligand>
</feature>
<feature type="binding site" evidence="1">
    <location>
        <position position="267"/>
    </location>
    <ligand>
        <name>substrate</name>
    </ligand>
</feature>
<feature type="binding site" evidence="1">
    <location>
        <begin position="268"/>
        <end position="273"/>
    </location>
    <ligand>
        <name>GTP</name>
        <dbReference type="ChEBI" id="CHEBI:37565"/>
    </ligand>
</feature>
<feature type="binding site" evidence="1">
    <location>
        <position position="294"/>
    </location>
    <ligand>
        <name>Mn(2+)</name>
        <dbReference type="ChEBI" id="CHEBI:29035"/>
    </ligand>
</feature>
<feature type="binding site" evidence="1">
    <location>
        <begin position="382"/>
        <end position="384"/>
    </location>
    <ligand>
        <name>substrate</name>
    </ligand>
</feature>
<feature type="binding site" evidence="1">
    <location>
        <position position="384"/>
    </location>
    <ligand>
        <name>GTP</name>
        <dbReference type="ChEBI" id="CHEBI:37565"/>
    </ligand>
</feature>
<feature type="binding site" evidence="1">
    <location>
        <position position="415"/>
    </location>
    <ligand>
        <name>GTP</name>
        <dbReference type="ChEBI" id="CHEBI:37565"/>
    </ligand>
</feature>
<feature type="binding site" evidence="1">
    <location>
        <begin position="516"/>
        <end position="519"/>
    </location>
    <ligand>
        <name>GTP</name>
        <dbReference type="ChEBI" id="CHEBI:37565"/>
    </ligand>
</feature>
<reference key="1">
    <citation type="journal article" date="2008" name="J. Bacteriol.">
        <title>Comparative genome sequence analysis of multidrug-resistant Acinetobacter baumannii.</title>
        <authorList>
            <person name="Adams M.D."/>
            <person name="Goglin K."/>
            <person name="Molyneaux N."/>
            <person name="Hujer K.M."/>
            <person name="Lavender H."/>
            <person name="Jamison J.J."/>
            <person name="MacDonald I.J."/>
            <person name="Martin K.M."/>
            <person name="Russo T."/>
            <person name="Campagnari A.A."/>
            <person name="Hujer A.M."/>
            <person name="Bonomo R.A."/>
            <person name="Gill S.R."/>
        </authorList>
    </citation>
    <scope>NUCLEOTIDE SEQUENCE [LARGE SCALE GENOMIC DNA]</scope>
    <source>
        <strain>AB0057</strain>
    </source>
</reference>
<proteinExistence type="inferred from homology"/>
<organism>
    <name type="scientific">Acinetobacter baumannii (strain AB0057)</name>
    <dbReference type="NCBI Taxonomy" id="480119"/>
    <lineage>
        <taxon>Bacteria</taxon>
        <taxon>Pseudomonadati</taxon>
        <taxon>Pseudomonadota</taxon>
        <taxon>Gammaproteobacteria</taxon>
        <taxon>Moraxellales</taxon>
        <taxon>Moraxellaceae</taxon>
        <taxon>Acinetobacter</taxon>
        <taxon>Acinetobacter calcoaceticus/baumannii complex</taxon>
    </lineage>
</organism>
<dbReference type="EC" id="4.1.1.32" evidence="1"/>
<dbReference type="EMBL" id="CP001182">
    <property type="protein sequence ID" value="ACJ42417.1"/>
    <property type="molecule type" value="Genomic_DNA"/>
</dbReference>
<dbReference type="RefSeq" id="WP_000214356.1">
    <property type="nucleotide sequence ID" value="NC_011586.2"/>
</dbReference>
<dbReference type="SMR" id="B7I624"/>
<dbReference type="KEGG" id="abn:AB57_3085"/>
<dbReference type="HOGENOM" id="CLU_028872_1_1_6"/>
<dbReference type="UniPathway" id="UPA00138"/>
<dbReference type="Proteomes" id="UP000007094">
    <property type="component" value="Chromosome"/>
</dbReference>
<dbReference type="GO" id="GO:0005829">
    <property type="term" value="C:cytosol"/>
    <property type="evidence" value="ECO:0007669"/>
    <property type="project" value="TreeGrafter"/>
</dbReference>
<dbReference type="GO" id="GO:0005525">
    <property type="term" value="F:GTP binding"/>
    <property type="evidence" value="ECO:0007669"/>
    <property type="project" value="UniProtKB-UniRule"/>
</dbReference>
<dbReference type="GO" id="GO:0030145">
    <property type="term" value="F:manganese ion binding"/>
    <property type="evidence" value="ECO:0007669"/>
    <property type="project" value="UniProtKB-UniRule"/>
</dbReference>
<dbReference type="GO" id="GO:0004613">
    <property type="term" value="F:phosphoenolpyruvate carboxykinase (GTP) activity"/>
    <property type="evidence" value="ECO:0007669"/>
    <property type="project" value="UniProtKB-UniRule"/>
</dbReference>
<dbReference type="GO" id="GO:0071333">
    <property type="term" value="P:cellular response to glucose stimulus"/>
    <property type="evidence" value="ECO:0007669"/>
    <property type="project" value="TreeGrafter"/>
</dbReference>
<dbReference type="GO" id="GO:0006094">
    <property type="term" value="P:gluconeogenesis"/>
    <property type="evidence" value="ECO:0007669"/>
    <property type="project" value="UniProtKB-UniRule"/>
</dbReference>
<dbReference type="GO" id="GO:0046327">
    <property type="term" value="P:glycerol biosynthetic process from pyruvate"/>
    <property type="evidence" value="ECO:0007669"/>
    <property type="project" value="TreeGrafter"/>
</dbReference>
<dbReference type="GO" id="GO:0006107">
    <property type="term" value="P:oxaloacetate metabolic process"/>
    <property type="evidence" value="ECO:0007669"/>
    <property type="project" value="TreeGrafter"/>
</dbReference>
<dbReference type="GO" id="GO:0019543">
    <property type="term" value="P:propionate catabolic process"/>
    <property type="evidence" value="ECO:0007669"/>
    <property type="project" value="TreeGrafter"/>
</dbReference>
<dbReference type="GO" id="GO:0033993">
    <property type="term" value="P:response to lipid"/>
    <property type="evidence" value="ECO:0007669"/>
    <property type="project" value="TreeGrafter"/>
</dbReference>
<dbReference type="GO" id="GO:0042594">
    <property type="term" value="P:response to starvation"/>
    <property type="evidence" value="ECO:0007669"/>
    <property type="project" value="TreeGrafter"/>
</dbReference>
<dbReference type="CDD" id="cd00819">
    <property type="entry name" value="PEPCK_GTP"/>
    <property type="match status" value="1"/>
</dbReference>
<dbReference type="FunFam" id="3.40.449.10:FF:000005">
    <property type="entry name" value="Phosphoenolpyruvate carboxykinase [GTP]"/>
    <property type="match status" value="1"/>
</dbReference>
<dbReference type="Gene3D" id="3.90.228.20">
    <property type="match status" value="1"/>
</dbReference>
<dbReference type="Gene3D" id="3.40.449.10">
    <property type="entry name" value="Phosphoenolpyruvate Carboxykinase, domain 1"/>
    <property type="match status" value="1"/>
</dbReference>
<dbReference type="Gene3D" id="2.170.8.10">
    <property type="entry name" value="Phosphoenolpyruvate Carboxykinase, domain 2"/>
    <property type="match status" value="1"/>
</dbReference>
<dbReference type="HAMAP" id="MF_00452">
    <property type="entry name" value="PEPCK_GTP"/>
    <property type="match status" value="1"/>
</dbReference>
<dbReference type="InterPro" id="IPR018091">
    <property type="entry name" value="PEP_carboxykin_GTP_CS"/>
</dbReference>
<dbReference type="InterPro" id="IPR013035">
    <property type="entry name" value="PEP_carboxykinase_C"/>
</dbReference>
<dbReference type="InterPro" id="IPR008209">
    <property type="entry name" value="PEP_carboxykinase_GTP"/>
</dbReference>
<dbReference type="InterPro" id="IPR035077">
    <property type="entry name" value="PEP_carboxykinase_GTP_C"/>
</dbReference>
<dbReference type="InterPro" id="IPR035078">
    <property type="entry name" value="PEP_carboxykinase_GTP_N"/>
</dbReference>
<dbReference type="InterPro" id="IPR008210">
    <property type="entry name" value="PEP_carboxykinase_N"/>
</dbReference>
<dbReference type="NCBIfam" id="NF003253">
    <property type="entry name" value="PRK04210.1"/>
    <property type="match status" value="1"/>
</dbReference>
<dbReference type="PANTHER" id="PTHR11561">
    <property type="entry name" value="PHOSPHOENOLPYRUVATE CARBOXYKINASE"/>
    <property type="match status" value="1"/>
</dbReference>
<dbReference type="PANTHER" id="PTHR11561:SF0">
    <property type="entry name" value="PHOSPHOENOLPYRUVATE CARBOXYKINASE [GTP]-RELATED"/>
    <property type="match status" value="1"/>
</dbReference>
<dbReference type="Pfam" id="PF00821">
    <property type="entry name" value="PEPCK_GTP"/>
    <property type="match status" value="1"/>
</dbReference>
<dbReference type="Pfam" id="PF17297">
    <property type="entry name" value="PEPCK_N"/>
    <property type="match status" value="1"/>
</dbReference>
<dbReference type="PIRSF" id="PIRSF001348">
    <property type="entry name" value="PEP_carboxykinase_GTP"/>
    <property type="match status" value="1"/>
</dbReference>
<dbReference type="SUPFAM" id="SSF68923">
    <property type="entry name" value="PEP carboxykinase N-terminal domain"/>
    <property type="match status" value="1"/>
</dbReference>
<dbReference type="SUPFAM" id="SSF53795">
    <property type="entry name" value="PEP carboxykinase-like"/>
    <property type="match status" value="1"/>
</dbReference>
<dbReference type="PROSITE" id="PS00505">
    <property type="entry name" value="PEPCK_GTP"/>
    <property type="match status" value="1"/>
</dbReference>